<name>ACCD_STRPD</name>
<keyword id="KW-0067">ATP-binding</keyword>
<keyword id="KW-0963">Cytoplasm</keyword>
<keyword id="KW-0275">Fatty acid biosynthesis</keyword>
<keyword id="KW-0276">Fatty acid metabolism</keyword>
<keyword id="KW-0444">Lipid biosynthesis</keyword>
<keyword id="KW-0443">Lipid metabolism</keyword>
<keyword id="KW-0479">Metal-binding</keyword>
<keyword id="KW-0547">Nucleotide-binding</keyword>
<keyword id="KW-0808">Transferase</keyword>
<keyword id="KW-0862">Zinc</keyword>
<keyword id="KW-0863">Zinc-finger</keyword>
<reference key="1">
    <citation type="journal article" date="2006" name="Proc. Natl. Acad. Sci. U.S.A.">
        <title>Molecular genetic anatomy of inter- and intraserotype variation in the human bacterial pathogen group A Streptococcus.</title>
        <authorList>
            <person name="Beres S.B."/>
            <person name="Richter E.W."/>
            <person name="Nagiec M.J."/>
            <person name="Sumby P."/>
            <person name="Porcella S.F."/>
            <person name="DeLeo F.R."/>
            <person name="Musser J.M."/>
        </authorList>
    </citation>
    <scope>NUCLEOTIDE SEQUENCE [LARGE SCALE GENOMIC DNA]</scope>
    <source>
        <strain>MGAS10270</strain>
    </source>
</reference>
<proteinExistence type="inferred from homology"/>
<dbReference type="EC" id="2.1.3.15" evidence="1"/>
<dbReference type="EMBL" id="CP000260">
    <property type="protein sequence ID" value="ABF34617.1"/>
    <property type="molecule type" value="Genomic_DNA"/>
</dbReference>
<dbReference type="SMR" id="Q1JFE2"/>
<dbReference type="KEGG" id="sph:MGAS10270_Spy1552"/>
<dbReference type="HOGENOM" id="CLU_015486_1_1_9"/>
<dbReference type="UniPathway" id="UPA00655">
    <property type="reaction ID" value="UER00711"/>
</dbReference>
<dbReference type="Proteomes" id="UP000002436">
    <property type="component" value="Chromosome"/>
</dbReference>
<dbReference type="GO" id="GO:0009317">
    <property type="term" value="C:acetyl-CoA carboxylase complex"/>
    <property type="evidence" value="ECO:0007669"/>
    <property type="project" value="InterPro"/>
</dbReference>
<dbReference type="GO" id="GO:0003989">
    <property type="term" value="F:acetyl-CoA carboxylase activity"/>
    <property type="evidence" value="ECO:0007669"/>
    <property type="project" value="InterPro"/>
</dbReference>
<dbReference type="GO" id="GO:0005524">
    <property type="term" value="F:ATP binding"/>
    <property type="evidence" value="ECO:0007669"/>
    <property type="project" value="UniProtKB-KW"/>
</dbReference>
<dbReference type="GO" id="GO:0016743">
    <property type="term" value="F:carboxyl- or carbamoyltransferase activity"/>
    <property type="evidence" value="ECO:0007669"/>
    <property type="project" value="UniProtKB-UniRule"/>
</dbReference>
<dbReference type="GO" id="GO:0008270">
    <property type="term" value="F:zinc ion binding"/>
    <property type="evidence" value="ECO:0007669"/>
    <property type="project" value="UniProtKB-UniRule"/>
</dbReference>
<dbReference type="GO" id="GO:0006633">
    <property type="term" value="P:fatty acid biosynthetic process"/>
    <property type="evidence" value="ECO:0007669"/>
    <property type="project" value="UniProtKB-KW"/>
</dbReference>
<dbReference type="GO" id="GO:2001295">
    <property type="term" value="P:malonyl-CoA biosynthetic process"/>
    <property type="evidence" value="ECO:0007669"/>
    <property type="project" value="UniProtKB-UniRule"/>
</dbReference>
<dbReference type="Gene3D" id="3.90.226.10">
    <property type="entry name" value="2-enoyl-CoA Hydratase, Chain A, domain 1"/>
    <property type="match status" value="1"/>
</dbReference>
<dbReference type="HAMAP" id="MF_01395">
    <property type="entry name" value="AcetylCoA_CT_beta"/>
    <property type="match status" value="1"/>
</dbReference>
<dbReference type="InterPro" id="IPR034733">
    <property type="entry name" value="AcCoA_carboxyl_beta"/>
</dbReference>
<dbReference type="InterPro" id="IPR000438">
    <property type="entry name" value="Acetyl_CoA_COase_Trfase_b_su"/>
</dbReference>
<dbReference type="InterPro" id="IPR029045">
    <property type="entry name" value="ClpP/crotonase-like_dom_sf"/>
</dbReference>
<dbReference type="InterPro" id="IPR011762">
    <property type="entry name" value="COA_CT_N"/>
</dbReference>
<dbReference type="NCBIfam" id="TIGR00515">
    <property type="entry name" value="accD"/>
    <property type="match status" value="1"/>
</dbReference>
<dbReference type="PANTHER" id="PTHR42995">
    <property type="entry name" value="ACETYL-COENZYME A CARBOXYLASE CARBOXYL TRANSFERASE SUBUNIT BETA, CHLOROPLASTIC"/>
    <property type="match status" value="1"/>
</dbReference>
<dbReference type="PANTHER" id="PTHR42995:SF5">
    <property type="entry name" value="ACETYL-COENZYME A CARBOXYLASE CARBOXYL TRANSFERASE SUBUNIT BETA, CHLOROPLASTIC"/>
    <property type="match status" value="1"/>
</dbReference>
<dbReference type="Pfam" id="PF01039">
    <property type="entry name" value="Carboxyl_trans"/>
    <property type="match status" value="1"/>
</dbReference>
<dbReference type="PRINTS" id="PR01070">
    <property type="entry name" value="ACCCTRFRASEB"/>
</dbReference>
<dbReference type="SUPFAM" id="SSF52096">
    <property type="entry name" value="ClpP/crotonase"/>
    <property type="match status" value="1"/>
</dbReference>
<dbReference type="PROSITE" id="PS50980">
    <property type="entry name" value="COA_CT_NTER"/>
    <property type="match status" value="1"/>
</dbReference>
<protein>
    <recommendedName>
        <fullName evidence="1">Acetyl-coenzyme A carboxylase carboxyl transferase subunit beta</fullName>
        <shortName evidence="1">ACCase subunit beta</shortName>
        <shortName evidence="1">Acetyl-CoA carboxylase carboxyltransferase subunit beta</shortName>
        <ecNumber evidence="1">2.1.3.15</ecNumber>
    </recommendedName>
</protein>
<gene>
    <name evidence="1" type="primary">accD</name>
    <name type="ordered locus">MGAS10270_Spy1552</name>
</gene>
<comment type="function">
    <text evidence="1">Component of the acetyl coenzyme A carboxylase (ACC) complex. Biotin carboxylase (BC) catalyzes the carboxylation of biotin on its carrier protein (BCCP) and then the CO(2) group is transferred by the transcarboxylase to acetyl-CoA to form malonyl-CoA.</text>
</comment>
<comment type="catalytic activity">
    <reaction evidence="1">
        <text>N(6)-carboxybiotinyl-L-lysyl-[protein] + acetyl-CoA = N(6)-biotinyl-L-lysyl-[protein] + malonyl-CoA</text>
        <dbReference type="Rhea" id="RHEA:54728"/>
        <dbReference type="Rhea" id="RHEA-COMP:10505"/>
        <dbReference type="Rhea" id="RHEA-COMP:10506"/>
        <dbReference type="ChEBI" id="CHEBI:57288"/>
        <dbReference type="ChEBI" id="CHEBI:57384"/>
        <dbReference type="ChEBI" id="CHEBI:83144"/>
        <dbReference type="ChEBI" id="CHEBI:83145"/>
        <dbReference type="EC" id="2.1.3.15"/>
    </reaction>
</comment>
<comment type="cofactor">
    <cofactor evidence="1">
        <name>Zn(2+)</name>
        <dbReference type="ChEBI" id="CHEBI:29105"/>
    </cofactor>
    <text evidence="1">Binds 1 zinc ion per subunit.</text>
</comment>
<comment type="pathway">
    <text evidence="1">Lipid metabolism; malonyl-CoA biosynthesis; malonyl-CoA from acetyl-CoA: step 1/1.</text>
</comment>
<comment type="subunit">
    <text evidence="1">Acetyl-CoA carboxylase is a heterohexamer composed of biotin carboxyl carrier protein (AccB), biotin carboxylase (AccC) and two subunits each of ACCase subunit alpha (AccA) and ACCase subunit beta (AccD).</text>
</comment>
<comment type="subcellular location">
    <subcellularLocation>
        <location evidence="1">Cytoplasm</location>
    </subcellularLocation>
</comment>
<comment type="similarity">
    <text evidence="1">Belongs to the AccD/PCCB family.</text>
</comment>
<sequence>MALFRKKDKYIRITPNNSLKGSVSHNVPEVPDELFAKCPACKHMIYKKDLGLAKICPTCSYNFRISAQERLTLTVDEGSFQELFISIETKDPLRFPGYQEKLQKAKETTGLHEAVLTGKAMVKGQQIALAIMDSHFIMASMGTVVGEKITRLFELAIEENLPVVIFTASGGARMQEGIMSLMQMAKVSAAVKRHSNAGLFYLTILTDPTTGGVTASFAMEGDIILAEPQSLVGFAGRRVIETTVRENLPDDFQKAEFLQDHGFVDAIVKRTELRDKIAHLVAFHGGGQ</sequence>
<accession>Q1JFE2</accession>
<evidence type="ECO:0000255" key="1">
    <source>
        <dbReference type="HAMAP-Rule" id="MF_01395"/>
    </source>
</evidence>
<evidence type="ECO:0000255" key="2">
    <source>
        <dbReference type="PROSITE-ProRule" id="PRU01136"/>
    </source>
</evidence>
<feature type="chain" id="PRO_0000389877" description="Acetyl-coenzyme A carboxylase carboxyl transferase subunit beta">
    <location>
        <begin position="1"/>
        <end position="288"/>
    </location>
</feature>
<feature type="domain" description="CoA carboxyltransferase N-terminal" evidence="2">
    <location>
        <begin position="34"/>
        <end position="288"/>
    </location>
</feature>
<feature type="zinc finger region" description="C4-type" evidence="1">
    <location>
        <begin position="38"/>
        <end position="59"/>
    </location>
</feature>
<feature type="binding site" evidence="1">
    <location>
        <position position="38"/>
    </location>
    <ligand>
        <name>Zn(2+)</name>
        <dbReference type="ChEBI" id="CHEBI:29105"/>
    </ligand>
</feature>
<feature type="binding site" evidence="1">
    <location>
        <position position="41"/>
    </location>
    <ligand>
        <name>Zn(2+)</name>
        <dbReference type="ChEBI" id="CHEBI:29105"/>
    </ligand>
</feature>
<feature type="binding site" evidence="1">
    <location>
        <position position="56"/>
    </location>
    <ligand>
        <name>Zn(2+)</name>
        <dbReference type="ChEBI" id="CHEBI:29105"/>
    </ligand>
</feature>
<feature type="binding site" evidence="1">
    <location>
        <position position="59"/>
    </location>
    <ligand>
        <name>Zn(2+)</name>
        <dbReference type="ChEBI" id="CHEBI:29105"/>
    </ligand>
</feature>
<organism>
    <name type="scientific">Streptococcus pyogenes serotype M2 (strain MGAS10270)</name>
    <dbReference type="NCBI Taxonomy" id="370552"/>
    <lineage>
        <taxon>Bacteria</taxon>
        <taxon>Bacillati</taxon>
        <taxon>Bacillota</taxon>
        <taxon>Bacilli</taxon>
        <taxon>Lactobacillales</taxon>
        <taxon>Streptococcaceae</taxon>
        <taxon>Streptococcus</taxon>
    </lineage>
</organism>